<reference key="1">
    <citation type="journal article" date="2001" name="Genome Res.">
        <title>The complete genome sequence of the lactic acid bacterium Lactococcus lactis ssp. lactis IL1403.</title>
        <authorList>
            <person name="Bolotin A."/>
            <person name="Wincker P."/>
            <person name="Mauger S."/>
            <person name="Jaillon O."/>
            <person name="Malarme K."/>
            <person name="Weissenbach J."/>
            <person name="Ehrlich S.D."/>
            <person name="Sorokin A."/>
        </authorList>
    </citation>
    <scope>NUCLEOTIDE SEQUENCE [LARGE SCALE GENOMIC DNA]</scope>
    <source>
        <strain>IL1403</strain>
    </source>
</reference>
<comment type="function">
    <text evidence="1">Necessary for normal cell division and for the maintenance of normal septation.</text>
</comment>
<comment type="cofactor">
    <cofactor evidence="1">
        <name>Mg(2+)</name>
        <dbReference type="ChEBI" id="CHEBI:18420"/>
    </cofactor>
</comment>
<comment type="similarity">
    <text evidence="1">Belongs to the TRAFAC class TrmE-Era-EngA-EngB-Septin-like GTPase superfamily. EngB GTPase family.</text>
</comment>
<name>ENGB_LACLA</name>
<accession>Q9CGE5</accession>
<organism>
    <name type="scientific">Lactococcus lactis subsp. lactis (strain IL1403)</name>
    <name type="common">Streptococcus lactis</name>
    <dbReference type="NCBI Taxonomy" id="272623"/>
    <lineage>
        <taxon>Bacteria</taxon>
        <taxon>Bacillati</taxon>
        <taxon>Bacillota</taxon>
        <taxon>Bacilli</taxon>
        <taxon>Lactobacillales</taxon>
        <taxon>Streptococcaceae</taxon>
        <taxon>Lactococcus</taxon>
    </lineage>
</organism>
<feature type="chain" id="PRO_0000157755" description="Probable GTP-binding protein EngB">
    <location>
        <begin position="1"/>
        <end position="195"/>
    </location>
</feature>
<feature type="domain" description="EngB-type G" evidence="1">
    <location>
        <begin position="24"/>
        <end position="195"/>
    </location>
</feature>
<feature type="binding site" evidence="1">
    <location>
        <begin position="32"/>
        <end position="39"/>
    </location>
    <ligand>
        <name>GTP</name>
        <dbReference type="ChEBI" id="CHEBI:37565"/>
    </ligand>
</feature>
<feature type="binding site" evidence="1">
    <location>
        <position position="39"/>
    </location>
    <ligand>
        <name>Mg(2+)</name>
        <dbReference type="ChEBI" id="CHEBI:18420"/>
    </ligand>
</feature>
<feature type="binding site" evidence="1">
    <location>
        <begin position="59"/>
        <end position="63"/>
    </location>
    <ligand>
        <name>GTP</name>
        <dbReference type="ChEBI" id="CHEBI:37565"/>
    </ligand>
</feature>
<feature type="binding site" evidence="1">
    <location>
        <position position="61"/>
    </location>
    <ligand>
        <name>Mg(2+)</name>
        <dbReference type="ChEBI" id="CHEBI:18420"/>
    </ligand>
</feature>
<feature type="binding site" evidence="1">
    <location>
        <begin position="77"/>
        <end position="80"/>
    </location>
    <ligand>
        <name>GTP</name>
        <dbReference type="ChEBI" id="CHEBI:37565"/>
    </ligand>
</feature>
<feature type="binding site" evidence="1">
    <location>
        <begin position="144"/>
        <end position="147"/>
    </location>
    <ligand>
        <name>GTP</name>
        <dbReference type="ChEBI" id="CHEBI:37565"/>
    </ligand>
</feature>
<feature type="binding site" evidence="1">
    <location>
        <begin position="176"/>
        <end position="178"/>
    </location>
    <ligand>
        <name>GTP</name>
        <dbReference type="ChEBI" id="CHEBI:37565"/>
    </ligand>
</feature>
<keyword id="KW-0131">Cell cycle</keyword>
<keyword id="KW-0132">Cell division</keyword>
<keyword id="KW-0342">GTP-binding</keyword>
<keyword id="KW-0460">Magnesium</keyword>
<keyword id="KW-0479">Metal-binding</keyword>
<keyword id="KW-0547">Nucleotide-binding</keyword>
<keyword id="KW-1185">Reference proteome</keyword>
<keyword id="KW-0717">Septation</keyword>
<protein>
    <recommendedName>
        <fullName evidence="1">Probable GTP-binding protein EngB</fullName>
    </recommendedName>
</protein>
<dbReference type="EMBL" id="AE005176">
    <property type="protein sequence ID" value="AAK05250.1"/>
    <property type="molecule type" value="Genomic_DNA"/>
</dbReference>
<dbReference type="PIR" id="H86768">
    <property type="entry name" value="H86768"/>
</dbReference>
<dbReference type="RefSeq" id="NP_267308.1">
    <property type="nucleotide sequence ID" value="NC_002662.1"/>
</dbReference>
<dbReference type="SMR" id="Q9CGE5"/>
<dbReference type="PaxDb" id="272623-L00157"/>
<dbReference type="EnsemblBacteria" id="AAK05250">
    <property type="protein sequence ID" value="AAK05250"/>
    <property type="gene ID" value="L00157"/>
</dbReference>
<dbReference type="KEGG" id="lla:L00157"/>
<dbReference type="PATRIC" id="fig|272623.7.peg.1232"/>
<dbReference type="eggNOG" id="COG0218">
    <property type="taxonomic scope" value="Bacteria"/>
</dbReference>
<dbReference type="HOGENOM" id="CLU_033732_3_0_9"/>
<dbReference type="OrthoDB" id="9804921at2"/>
<dbReference type="Proteomes" id="UP000002196">
    <property type="component" value="Chromosome"/>
</dbReference>
<dbReference type="GO" id="GO:0005829">
    <property type="term" value="C:cytosol"/>
    <property type="evidence" value="ECO:0007669"/>
    <property type="project" value="TreeGrafter"/>
</dbReference>
<dbReference type="GO" id="GO:0005525">
    <property type="term" value="F:GTP binding"/>
    <property type="evidence" value="ECO:0007669"/>
    <property type="project" value="UniProtKB-UniRule"/>
</dbReference>
<dbReference type="GO" id="GO:0046872">
    <property type="term" value="F:metal ion binding"/>
    <property type="evidence" value="ECO:0007669"/>
    <property type="project" value="UniProtKB-KW"/>
</dbReference>
<dbReference type="GO" id="GO:0000917">
    <property type="term" value="P:division septum assembly"/>
    <property type="evidence" value="ECO:0007669"/>
    <property type="project" value="UniProtKB-KW"/>
</dbReference>
<dbReference type="CDD" id="cd01876">
    <property type="entry name" value="YihA_EngB"/>
    <property type="match status" value="1"/>
</dbReference>
<dbReference type="FunFam" id="3.40.50.300:FF:000098">
    <property type="entry name" value="Probable GTP-binding protein EngB"/>
    <property type="match status" value="1"/>
</dbReference>
<dbReference type="Gene3D" id="3.40.50.300">
    <property type="entry name" value="P-loop containing nucleotide triphosphate hydrolases"/>
    <property type="match status" value="1"/>
</dbReference>
<dbReference type="HAMAP" id="MF_00321">
    <property type="entry name" value="GTPase_EngB"/>
    <property type="match status" value="1"/>
</dbReference>
<dbReference type="InterPro" id="IPR030393">
    <property type="entry name" value="G_ENGB_dom"/>
</dbReference>
<dbReference type="InterPro" id="IPR006073">
    <property type="entry name" value="GTP-bd"/>
</dbReference>
<dbReference type="InterPro" id="IPR019987">
    <property type="entry name" value="GTP-bd_ribosome_bio_YsxC"/>
</dbReference>
<dbReference type="InterPro" id="IPR027417">
    <property type="entry name" value="P-loop_NTPase"/>
</dbReference>
<dbReference type="NCBIfam" id="TIGR03598">
    <property type="entry name" value="GTPase_YsxC"/>
    <property type="match status" value="1"/>
</dbReference>
<dbReference type="PANTHER" id="PTHR11649:SF13">
    <property type="entry name" value="ENGB-TYPE G DOMAIN-CONTAINING PROTEIN"/>
    <property type="match status" value="1"/>
</dbReference>
<dbReference type="PANTHER" id="PTHR11649">
    <property type="entry name" value="MSS1/TRME-RELATED GTP-BINDING PROTEIN"/>
    <property type="match status" value="1"/>
</dbReference>
<dbReference type="Pfam" id="PF01926">
    <property type="entry name" value="MMR_HSR1"/>
    <property type="match status" value="1"/>
</dbReference>
<dbReference type="PRINTS" id="PR00449">
    <property type="entry name" value="RASTRNSFRMNG"/>
</dbReference>
<dbReference type="SUPFAM" id="SSF52540">
    <property type="entry name" value="P-loop containing nucleoside triphosphate hydrolases"/>
    <property type="match status" value="1"/>
</dbReference>
<dbReference type="PROSITE" id="PS51706">
    <property type="entry name" value="G_ENGB"/>
    <property type="match status" value="1"/>
</dbReference>
<gene>
    <name evidence="1" type="primary">engB</name>
    <name type="ordered locus">LL1152</name>
    <name type="ORF">L00157</name>
</gene>
<proteinExistence type="inferred from homology"/>
<sequence>MTINTNNLTITISAASKKQYPENDWPEIALAGRSNVGKSSFINTLLNRKNFARTSGQPGKTQLLNFYNIDDQLHFVDVPGYGYARVSKKEREKWGKMIEEYLTTRENLKAVVSLVDIRHEPSEDDLMMYEFLKYYHIPVILVATKADKVPRGKWNKHESIIKKAMKFDSTDDFIIFSSTDKTGFEEAWEAILRYL</sequence>
<evidence type="ECO:0000255" key="1">
    <source>
        <dbReference type="HAMAP-Rule" id="MF_00321"/>
    </source>
</evidence>